<organism>
    <name type="scientific">Saccharophagus degradans (strain 2-40 / ATCC 43961 / DSM 17024)</name>
    <dbReference type="NCBI Taxonomy" id="203122"/>
    <lineage>
        <taxon>Bacteria</taxon>
        <taxon>Pseudomonadati</taxon>
        <taxon>Pseudomonadota</taxon>
        <taxon>Gammaproteobacteria</taxon>
        <taxon>Cellvibrionales</taxon>
        <taxon>Cellvibrionaceae</taxon>
        <taxon>Saccharophagus</taxon>
    </lineage>
</organism>
<keyword id="KW-1185">Reference proteome</keyword>
<keyword id="KW-0687">Ribonucleoprotein</keyword>
<keyword id="KW-0689">Ribosomal protein</keyword>
<proteinExistence type="inferred from homology"/>
<gene>
    <name evidence="1" type="primary">rpmJ</name>
    <name type="ordered locus">Sde_0980</name>
</gene>
<sequence>MKVRASIKKMCRNCKLVRRKGVLRVICSAEPRHKQRQG</sequence>
<dbReference type="EMBL" id="CP000282">
    <property type="protein sequence ID" value="ABD80242.1"/>
    <property type="molecule type" value="Genomic_DNA"/>
</dbReference>
<dbReference type="RefSeq" id="WP_011467462.1">
    <property type="nucleotide sequence ID" value="NC_007912.1"/>
</dbReference>
<dbReference type="SMR" id="Q21M37"/>
<dbReference type="STRING" id="203122.Sde_0980"/>
<dbReference type="GeneID" id="98615745"/>
<dbReference type="KEGG" id="sde:Sde_0980"/>
<dbReference type="eggNOG" id="COG0257">
    <property type="taxonomic scope" value="Bacteria"/>
</dbReference>
<dbReference type="HOGENOM" id="CLU_135723_6_2_6"/>
<dbReference type="OrthoDB" id="9802520at2"/>
<dbReference type="Proteomes" id="UP000001947">
    <property type="component" value="Chromosome"/>
</dbReference>
<dbReference type="GO" id="GO:0005737">
    <property type="term" value="C:cytoplasm"/>
    <property type="evidence" value="ECO:0007669"/>
    <property type="project" value="UniProtKB-ARBA"/>
</dbReference>
<dbReference type="GO" id="GO:1990904">
    <property type="term" value="C:ribonucleoprotein complex"/>
    <property type="evidence" value="ECO:0007669"/>
    <property type="project" value="UniProtKB-KW"/>
</dbReference>
<dbReference type="GO" id="GO:0005840">
    <property type="term" value="C:ribosome"/>
    <property type="evidence" value="ECO:0007669"/>
    <property type="project" value="UniProtKB-KW"/>
</dbReference>
<dbReference type="GO" id="GO:0003735">
    <property type="term" value="F:structural constituent of ribosome"/>
    <property type="evidence" value="ECO:0007669"/>
    <property type="project" value="InterPro"/>
</dbReference>
<dbReference type="GO" id="GO:0006412">
    <property type="term" value="P:translation"/>
    <property type="evidence" value="ECO:0007669"/>
    <property type="project" value="UniProtKB-UniRule"/>
</dbReference>
<dbReference type="HAMAP" id="MF_00251">
    <property type="entry name" value="Ribosomal_bL36"/>
    <property type="match status" value="1"/>
</dbReference>
<dbReference type="InterPro" id="IPR000473">
    <property type="entry name" value="Ribosomal_bL36"/>
</dbReference>
<dbReference type="InterPro" id="IPR035977">
    <property type="entry name" value="Ribosomal_bL36_sp"/>
</dbReference>
<dbReference type="NCBIfam" id="TIGR01022">
    <property type="entry name" value="rpmJ_bact"/>
    <property type="match status" value="1"/>
</dbReference>
<dbReference type="PANTHER" id="PTHR42888">
    <property type="entry name" value="50S RIBOSOMAL PROTEIN L36, CHLOROPLASTIC"/>
    <property type="match status" value="1"/>
</dbReference>
<dbReference type="PANTHER" id="PTHR42888:SF1">
    <property type="entry name" value="LARGE RIBOSOMAL SUBUNIT PROTEIN BL36C"/>
    <property type="match status" value="1"/>
</dbReference>
<dbReference type="Pfam" id="PF00444">
    <property type="entry name" value="Ribosomal_L36"/>
    <property type="match status" value="1"/>
</dbReference>
<dbReference type="SUPFAM" id="SSF57840">
    <property type="entry name" value="Ribosomal protein L36"/>
    <property type="match status" value="1"/>
</dbReference>
<dbReference type="PROSITE" id="PS00828">
    <property type="entry name" value="RIBOSOMAL_L36"/>
    <property type="match status" value="1"/>
</dbReference>
<reference key="1">
    <citation type="journal article" date="2008" name="PLoS Genet.">
        <title>Complete genome sequence of the complex carbohydrate-degrading marine bacterium, Saccharophagus degradans strain 2-40 T.</title>
        <authorList>
            <person name="Weiner R.M."/>
            <person name="Taylor L.E. II"/>
            <person name="Henrissat B."/>
            <person name="Hauser L."/>
            <person name="Land M."/>
            <person name="Coutinho P.M."/>
            <person name="Rancurel C."/>
            <person name="Saunders E.H."/>
            <person name="Longmire A.G."/>
            <person name="Zhang H."/>
            <person name="Bayer E.A."/>
            <person name="Gilbert H.J."/>
            <person name="Larimer F."/>
            <person name="Zhulin I.B."/>
            <person name="Ekborg N.A."/>
            <person name="Lamed R."/>
            <person name="Richardson P.M."/>
            <person name="Borovok I."/>
            <person name="Hutcheson S."/>
        </authorList>
    </citation>
    <scope>NUCLEOTIDE SEQUENCE [LARGE SCALE GENOMIC DNA]</scope>
    <source>
        <strain>2-40 / ATCC 43961 / DSM 17024</strain>
    </source>
</reference>
<protein>
    <recommendedName>
        <fullName evidence="1">Large ribosomal subunit protein bL36</fullName>
    </recommendedName>
    <alternativeName>
        <fullName evidence="2">50S ribosomal protein L36</fullName>
    </alternativeName>
</protein>
<name>RL36_SACD2</name>
<feature type="chain" id="PRO_0000302288" description="Large ribosomal subunit protein bL36">
    <location>
        <begin position="1"/>
        <end position="38"/>
    </location>
</feature>
<accession>Q21M37</accession>
<comment type="similarity">
    <text evidence="1">Belongs to the bacterial ribosomal protein bL36 family.</text>
</comment>
<evidence type="ECO:0000255" key="1">
    <source>
        <dbReference type="HAMAP-Rule" id="MF_00251"/>
    </source>
</evidence>
<evidence type="ECO:0000305" key="2"/>